<evidence type="ECO:0000255" key="1">
    <source>
        <dbReference type="HAMAP-Rule" id="MF_00268"/>
    </source>
</evidence>
<gene>
    <name evidence="1" type="primary">recA</name>
    <name type="ordered locus">PMT9312_1654</name>
</gene>
<sequence>MSLEEKKKPESKEKDKALSLVLGQIERNFGRGSIMRLGDASRMKVETISTGALTLDLALGGGYPKGRVVEVYGPESSGKTTLTLHAIAEVQKNGGVAAFVDAEHALDPVYAASLGVDVENLLVSQPDTGEMALEIVDQLIRSSAVDLVVVDSVAALTPRAEIEGEMGDHVIGSQARLMSQAMRKITGNIGKSGCTVIFLNQLRLKIGVTYGNPETTTGGNALKFYASVRLDIRRIQTLKRGTEEYGIRAKVKVAKNKVAPPFRIAEFDILFGKGISTTGCLLDLAEETNIIIRRGAWYSYEGENIGQGRDNTIIWLDQNLEIRNKVESMVKEKLTEGTEVSSNSMKALNSNPANTIAVNDIKTVA</sequence>
<feature type="chain" id="PRO_1000047963" description="Protein RecA">
    <location>
        <begin position="1"/>
        <end position="365"/>
    </location>
</feature>
<feature type="binding site" evidence="1">
    <location>
        <begin position="73"/>
        <end position="80"/>
    </location>
    <ligand>
        <name>ATP</name>
        <dbReference type="ChEBI" id="CHEBI:30616"/>
    </ligand>
</feature>
<accession>Q318I0</accession>
<name>RECA_PROM9</name>
<comment type="function">
    <text evidence="1">Can catalyze the hydrolysis of ATP in the presence of single-stranded DNA, the ATP-dependent uptake of single-stranded DNA by duplex DNA, and the ATP-dependent hybridization of homologous single-stranded DNAs. It interacts with LexA causing its activation and leading to its autocatalytic cleavage.</text>
</comment>
<comment type="subcellular location">
    <subcellularLocation>
        <location evidence="1">Cytoplasm</location>
    </subcellularLocation>
</comment>
<comment type="similarity">
    <text evidence="1">Belongs to the RecA family.</text>
</comment>
<proteinExistence type="inferred from homology"/>
<reference key="1">
    <citation type="journal article" date="2006" name="Science">
        <title>Genomic islands and the ecology and evolution of Prochlorococcus.</title>
        <authorList>
            <person name="Coleman M.L."/>
            <person name="Sullivan M.B."/>
            <person name="Martiny A.C."/>
            <person name="Steglich C."/>
            <person name="Barry K."/>
            <person name="Delong E.F."/>
            <person name="Chisholm S.W."/>
        </authorList>
    </citation>
    <scope>NUCLEOTIDE SEQUENCE [LARGE SCALE GENOMIC DNA]</scope>
    <source>
        <strain>MIT 9312</strain>
    </source>
</reference>
<protein>
    <recommendedName>
        <fullName evidence="1">Protein RecA</fullName>
    </recommendedName>
    <alternativeName>
        <fullName evidence="1">Recombinase A</fullName>
    </alternativeName>
</protein>
<keyword id="KW-0067">ATP-binding</keyword>
<keyword id="KW-0963">Cytoplasm</keyword>
<keyword id="KW-0227">DNA damage</keyword>
<keyword id="KW-0233">DNA recombination</keyword>
<keyword id="KW-0234">DNA repair</keyword>
<keyword id="KW-0238">DNA-binding</keyword>
<keyword id="KW-0547">Nucleotide-binding</keyword>
<keyword id="KW-0742">SOS response</keyword>
<organism>
    <name type="scientific">Prochlorococcus marinus (strain MIT 9312)</name>
    <dbReference type="NCBI Taxonomy" id="74546"/>
    <lineage>
        <taxon>Bacteria</taxon>
        <taxon>Bacillati</taxon>
        <taxon>Cyanobacteriota</taxon>
        <taxon>Cyanophyceae</taxon>
        <taxon>Synechococcales</taxon>
        <taxon>Prochlorococcaceae</taxon>
        <taxon>Prochlorococcus</taxon>
    </lineage>
</organism>
<dbReference type="EMBL" id="CP000111">
    <property type="protein sequence ID" value="ABB50715.1"/>
    <property type="molecule type" value="Genomic_DNA"/>
</dbReference>
<dbReference type="RefSeq" id="WP_011377196.1">
    <property type="nucleotide sequence ID" value="NC_007577.1"/>
</dbReference>
<dbReference type="SMR" id="Q318I0"/>
<dbReference type="STRING" id="74546.PMT9312_1654"/>
<dbReference type="KEGG" id="pmi:PMT9312_1654"/>
<dbReference type="eggNOG" id="COG0468">
    <property type="taxonomic scope" value="Bacteria"/>
</dbReference>
<dbReference type="HOGENOM" id="CLU_040469_3_2_3"/>
<dbReference type="OrthoDB" id="9776733at2"/>
<dbReference type="Proteomes" id="UP000002715">
    <property type="component" value="Chromosome"/>
</dbReference>
<dbReference type="GO" id="GO:0005829">
    <property type="term" value="C:cytosol"/>
    <property type="evidence" value="ECO:0007669"/>
    <property type="project" value="TreeGrafter"/>
</dbReference>
<dbReference type="GO" id="GO:0005524">
    <property type="term" value="F:ATP binding"/>
    <property type="evidence" value="ECO:0007669"/>
    <property type="project" value="UniProtKB-UniRule"/>
</dbReference>
<dbReference type="GO" id="GO:0016887">
    <property type="term" value="F:ATP hydrolysis activity"/>
    <property type="evidence" value="ECO:0007669"/>
    <property type="project" value="InterPro"/>
</dbReference>
<dbReference type="GO" id="GO:0140664">
    <property type="term" value="F:ATP-dependent DNA damage sensor activity"/>
    <property type="evidence" value="ECO:0007669"/>
    <property type="project" value="InterPro"/>
</dbReference>
<dbReference type="GO" id="GO:0003684">
    <property type="term" value="F:damaged DNA binding"/>
    <property type="evidence" value="ECO:0007669"/>
    <property type="project" value="UniProtKB-UniRule"/>
</dbReference>
<dbReference type="GO" id="GO:0003697">
    <property type="term" value="F:single-stranded DNA binding"/>
    <property type="evidence" value="ECO:0007669"/>
    <property type="project" value="UniProtKB-UniRule"/>
</dbReference>
<dbReference type="GO" id="GO:0006310">
    <property type="term" value="P:DNA recombination"/>
    <property type="evidence" value="ECO:0007669"/>
    <property type="project" value="UniProtKB-UniRule"/>
</dbReference>
<dbReference type="GO" id="GO:0006281">
    <property type="term" value="P:DNA repair"/>
    <property type="evidence" value="ECO:0007669"/>
    <property type="project" value="UniProtKB-UniRule"/>
</dbReference>
<dbReference type="GO" id="GO:0009432">
    <property type="term" value="P:SOS response"/>
    <property type="evidence" value="ECO:0007669"/>
    <property type="project" value="UniProtKB-UniRule"/>
</dbReference>
<dbReference type="CDD" id="cd00983">
    <property type="entry name" value="RecA"/>
    <property type="match status" value="1"/>
</dbReference>
<dbReference type="FunFam" id="3.40.50.300:FF:000087">
    <property type="entry name" value="Recombinase RecA"/>
    <property type="match status" value="1"/>
</dbReference>
<dbReference type="Gene3D" id="3.40.50.300">
    <property type="entry name" value="P-loop containing nucleotide triphosphate hydrolases"/>
    <property type="match status" value="1"/>
</dbReference>
<dbReference type="HAMAP" id="MF_00268">
    <property type="entry name" value="RecA"/>
    <property type="match status" value="1"/>
</dbReference>
<dbReference type="InterPro" id="IPR003593">
    <property type="entry name" value="AAA+_ATPase"/>
</dbReference>
<dbReference type="InterPro" id="IPR013765">
    <property type="entry name" value="DNA_recomb/repair_RecA"/>
</dbReference>
<dbReference type="InterPro" id="IPR020584">
    <property type="entry name" value="DNA_recomb/repair_RecA_CS"/>
</dbReference>
<dbReference type="InterPro" id="IPR027417">
    <property type="entry name" value="P-loop_NTPase"/>
</dbReference>
<dbReference type="InterPro" id="IPR049261">
    <property type="entry name" value="RecA-like_C"/>
</dbReference>
<dbReference type="InterPro" id="IPR049428">
    <property type="entry name" value="RecA-like_N"/>
</dbReference>
<dbReference type="InterPro" id="IPR020588">
    <property type="entry name" value="RecA_ATP-bd"/>
</dbReference>
<dbReference type="InterPro" id="IPR023400">
    <property type="entry name" value="RecA_C_sf"/>
</dbReference>
<dbReference type="InterPro" id="IPR020587">
    <property type="entry name" value="RecA_monomer-monomer_interface"/>
</dbReference>
<dbReference type="NCBIfam" id="TIGR02012">
    <property type="entry name" value="tigrfam_recA"/>
    <property type="match status" value="1"/>
</dbReference>
<dbReference type="PANTHER" id="PTHR45900:SF1">
    <property type="entry name" value="MITOCHONDRIAL DNA REPAIR PROTEIN RECA HOMOLOG-RELATED"/>
    <property type="match status" value="1"/>
</dbReference>
<dbReference type="PANTHER" id="PTHR45900">
    <property type="entry name" value="RECA"/>
    <property type="match status" value="1"/>
</dbReference>
<dbReference type="Pfam" id="PF00154">
    <property type="entry name" value="RecA"/>
    <property type="match status" value="1"/>
</dbReference>
<dbReference type="Pfam" id="PF21096">
    <property type="entry name" value="RecA_C"/>
    <property type="match status" value="1"/>
</dbReference>
<dbReference type="PRINTS" id="PR00142">
    <property type="entry name" value="RECA"/>
</dbReference>
<dbReference type="SMART" id="SM00382">
    <property type="entry name" value="AAA"/>
    <property type="match status" value="1"/>
</dbReference>
<dbReference type="SUPFAM" id="SSF52540">
    <property type="entry name" value="P-loop containing nucleoside triphosphate hydrolases"/>
    <property type="match status" value="1"/>
</dbReference>
<dbReference type="SUPFAM" id="SSF54752">
    <property type="entry name" value="RecA protein, C-terminal domain"/>
    <property type="match status" value="1"/>
</dbReference>
<dbReference type="PROSITE" id="PS00321">
    <property type="entry name" value="RECA_1"/>
    <property type="match status" value="1"/>
</dbReference>
<dbReference type="PROSITE" id="PS50162">
    <property type="entry name" value="RECA_2"/>
    <property type="match status" value="1"/>
</dbReference>
<dbReference type="PROSITE" id="PS50163">
    <property type="entry name" value="RECA_3"/>
    <property type="match status" value="1"/>
</dbReference>